<sequence length="1591" mass="182911">MSSFIPLNFLEDTVSKKDLEEEHTRELQVEQAYKLFQSALKLQKQKQYESAYKVYEELFKLDIVSNHYFEELDFIRGLQDGSQNTDTDELTLLSPNVKSLRYLIFRNRGFLYLDMLKSNTENKSAEKVKEMFYPLLDDFCIALLYNEPDEKLLETLHEIFSYIGSERLSRFVLEYSLTSRKESDDLSGLLPIDQTVLSQYKTMLEHLSSGKFPKLDLKHLSFLEPIRLDIFAQQEKLASKKVAVIKSTSTKWVDLLDAINIHLKENQDESKIEDANRPRIRIFEPYVLTEEPLDIVRIEFTKRGVAVPATETEVTKAQPEQIVQERKPEEDNRVQRSSKRLSKVEDEIPAVTLESSHFLNMDYFRNQMNETIPNFEIFDVCSTYVEDGSGAQYIKDFKNIVSDWNDSYARAILSYDTAKSEDDNLKLLDLLSGYGKSEELKEKNIPPLGEIDIEFPELNYVEFKTYIIKHLLSKILTTKWSDKLYEKFTEWIVQFEGYIINDIDVESAIGVLEVLVDISTSLESQIKDSINNKLNKAVVNSMCQDLLRIKDKIIRWINYIETFPINDLQVASRFKWCQIIKEKAETKSWTENHPVKHKLQKLLGDAHFKINYPNYKNFIDFSKDSINSQLTIISVLAIFWRILSTSSTEDNKEAIRLLEDILLDSNTEPSDAILSIRNFLKQGSIDMKLSLWNILLSFYQSSNSGDKLTVGFEECVLFLNDYLVNEYVLLDEESRLVTLSRILGFYGSSISFVVTSLASTNWILMHPIKVQTLRLFFELSLLFEINEEASYISSLATSIKSKSTKSYHHLTNTLIKTIILILASIQKSNPQILHSVIRLFHTQLGLIGICGHAGGSFLEIAQEYLKSLPNSDQDICQIIKCKYHYSISIDGVVPADHGTARLDELNKNDCKELASFVLPLCFSKGGSTLNNVPKHDIKLLIDEIYDVIGDPDFDSNEALGRNKATLNYFLDNTRLTKRLFQEAFHGLVRLELGEAEEDKQFNGLYYIEGLLLFSSYKLRKKNMQSRAVELESAISLFENDIICGSNRFESWFLLGQSYGYLVEDDLIWTADKLTASDRKITTANLQRKSLICYLMAINKSLDESIKDVIKPVVGNLMSLFAKEMFSAVCEPMSMHAFKVQSHPRFINRVNGALFEPVSQFPAVDKTVCLKIIQQSLQLSIKSSCREWSDYYYLAKVQRKLDKPAGLVMETMASACRSAFKNKHADNIIEPHYNLVSFALKYVKSNRLDSKDALKYLIEDPLIKLEVGEETDFIKLIIKALNKIDSSDKKNWQHKAKYRLARLMQEEYHDVKGAIDQMSSFISLKTPNKALVSIWKPEPERPGKHFLYTFQYIHFYIELLKEIDDLDSLVAMLPKLRRSNSVMINLSIAWEILCSSVCKIIRESYGIGDNFEFTENLINTLPYQTFAANVKLLPDMMRRQSVPENLKSVLCFLFTVNDIKKLNNGYGPTSFIDDTLVTLYFMIYLNYFEKSSTEVTTDSPGLKKKIAKRDIFPLTNDILKAFKKDIEDVTKQKSYNELITAQKLKQGLNEDKSLENVPASANVNEIIVIDDDDDDNLSQEPATKKSKTESNS</sequence>
<reference key="1">
    <citation type="journal article" date="2004" name="Proc. Natl. Acad. Sci. U.S.A.">
        <title>The diploid genome sequence of Candida albicans.</title>
        <authorList>
            <person name="Jones T."/>
            <person name="Federspiel N.A."/>
            <person name="Chibana H."/>
            <person name="Dungan J."/>
            <person name="Kalman S."/>
            <person name="Magee B.B."/>
            <person name="Newport G."/>
            <person name="Thorstenson Y.R."/>
            <person name="Agabian N."/>
            <person name="Magee P.T."/>
            <person name="Davis R.W."/>
            <person name="Scherer S."/>
        </authorList>
    </citation>
    <scope>NUCLEOTIDE SEQUENCE [LARGE SCALE GENOMIC DNA]</scope>
    <source>
        <strain>SC5314 / ATCC MYA-2876</strain>
    </source>
</reference>
<reference key="2">
    <citation type="journal article" date="2007" name="Genome Biol.">
        <title>Assembly of the Candida albicans genome into sixteen supercontigs aligned on the eight chromosomes.</title>
        <authorList>
            <person name="van het Hoog M."/>
            <person name="Rast T.J."/>
            <person name="Martchenko M."/>
            <person name="Grindle S."/>
            <person name="Dignard D."/>
            <person name="Hogues H."/>
            <person name="Cuomo C."/>
            <person name="Berriman M."/>
            <person name="Scherer S."/>
            <person name="Magee B.B."/>
            <person name="Whiteway M."/>
            <person name="Chibana H."/>
            <person name="Nantel A."/>
            <person name="Magee P.T."/>
        </authorList>
    </citation>
    <scope>GENOME REANNOTATION</scope>
    <source>
        <strain>SC5314 / ATCC MYA-2876</strain>
    </source>
</reference>
<reference key="3">
    <citation type="journal article" date="2013" name="Genome Biol.">
        <title>Assembly of a phased diploid Candida albicans genome facilitates allele-specific measurements and provides a simple model for repeat and indel structure.</title>
        <authorList>
            <person name="Muzzey D."/>
            <person name="Schwartz K."/>
            <person name="Weissman J.S."/>
            <person name="Sherlock G."/>
        </authorList>
    </citation>
    <scope>NUCLEOTIDE SEQUENCE [LARGE SCALE GENOMIC DNA]</scope>
    <scope>GENOME REANNOTATION</scope>
    <source>
        <strain>SC5314 / ATCC MYA-2876</strain>
    </source>
</reference>
<protein>
    <recommendedName>
        <fullName>Histone transcription regulator 3 homolog</fullName>
    </recommendedName>
</protein>
<accession>Q5ADX2</accession>
<accession>A0A1D8PKU8</accession>
<evidence type="ECO:0000250" key="1"/>
<evidence type="ECO:0000256" key="2">
    <source>
        <dbReference type="SAM" id="MobiDB-lite"/>
    </source>
</evidence>
<evidence type="ECO:0000305" key="3"/>
<proteinExistence type="inferred from homology"/>
<name>HIR3_CANAL</name>
<organism>
    <name type="scientific">Candida albicans (strain SC5314 / ATCC MYA-2876)</name>
    <name type="common">Yeast</name>
    <dbReference type="NCBI Taxonomy" id="237561"/>
    <lineage>
        <taxon>Eukaryota</taxon>
        <taxon>Fungi</taxon>
        <taxon>Dikarya</taxon>
        <taxon>Ascomycota</taxon>
        <taxon>Saccharomycotina</taxon>
        <taxon>Pichiomycetes</taxon>
        <taxon>Debaryomycetaceae</taxon>
        <taxon>Candida/Lodderomyces clade</taxon>
        <taxon>Candida</taxon>
    </lineage>
</organism>
<comment type="function">
    <text evidence="1">Has a role in a nucleosome assembly pathway that is required for the integrity of heterochromatin and proper chromosome segregation.</text>
</comment>
<comment type="subcellular location">
    <subcellularLocation>
        <location evidence="1">Nucleus</location>
    </subcellularLocation>
</comment>
<comment type="similarity">
    <text evidence="3">Belongs to the HIR3 family.</text>
</comment>
<dbReference type="EMBL" id="CP017625">
    <property type="protein sequence ID" value="AOW28767.1"/>
    <property type="molecule type" value="Genomic_DNA"/>
</dbReference>
<dbReference type="RefSeq" id="XP_019330892.1">
    <property type="nucleotide sequence ID" value="XM_019475347.1"/>
</dbReference>
<dbReference type="SMR" id="Q5ADX2"/>
<dbReference type="FunCoup" id="Q5ADX2">
    <property type="interactions" value="168"/>
</dbReference>
<dbReference type="STRING" id="237561.Q5ADX2"/>
<dbReference type="EnsemblFungi" id="C3_07680W_A-T">
    <property type="protein sequence ID" value="C3_07680W_A-T-p1"/>
    <property type="gene ID" value="C3_07680W_A"/>
</dbReference>
<dbReference type="GeneID" id="3638459"/>
<dbReference type="KEGG" id="cal:CAALFM_C307680WA"/>
<dbReference type="CGD" id="CAL0000198181">
    <property type="gene designation" value="HIR3"/>
</dbReference>
<dbReference type="VEuPathDB" id="FungiDB:C3_07680W_A"/>
<dbReference type="eggNOG" id="ENOG502QQX4">
    <property type="taxonomic scope" value="Eukaryota"/>
</dbReference>
<dbReference type="HOGENOM" id="CLU_001316_0_0_1"/>
<dbReference type="InParanoid" id="Q5ADX2"/>
<dbReference type="OMA" id="WETWYRL"/>
<dbReference type="OrthoDB" id="77564at2759"/>
<dbReference type="PRO" id="PR:Q5ADX2"/>
<dbReference type="Proteomes" id="UP000000559">
    <property type="component" value="Chromosome 3"/>
</dbReference>
<dbReference type="GO" id="GO:0000417">
    <property type="term" value="C:HIR complex"/>
    <property type="evidence" value="ECO:0000318"/>
    <property type="project" value="GO_Central"/>
</dbReference>
<dbReference type="GO" id="GO:0005634">
    <property type="term" value="C:nucleus"/>
    <property type="evidence" value="ECO:0000318"/>
    <property type="project" value="GO_Central"/>
</dbReference>
<dbReference type="GO" id="GO:0006325">
    <property type="term" value="P:chromatin organization"/>
    <property type="evidence" value="ECO:0007669"/>
    <property type="project" value="InterPro"/>
</dbReference>
<dbReference type="GO" id="GO:0007059">
    <property type="term" value="P:chromosome segregation"/>
    <property type="evidence" value="ECO:0007669"/>
    <property type="project" value="UniProtKB-KW"/>
</dbReference>
<dbReference type="GO" id="GO:0030447">
    <property type="term" value="P:filamentous growth"/>
    <property type="evidence" value="ECO:0000315"/>
    <property type="project" value="CGD"/>
</dbReference>
<dbReference type="GO" id="GO:0030448">
    <property type="term" value="P:hyphal growth"/>
    <property type="evidence" value="ECO:0000315"/>
    <property type="project" value="CGD"/>
</dbReference>
<dbReference type="GO" id="GO:0090033">
    <property type="term" value="P:positive regulation of filamentous growth"/>
    <property type="evidence" value="ECO:0000315"/>
    <property type="project" value="CGD"/>
</dbReference>
<dbReference type="InterPro" id="IPR033053">
    <property type="entry name" value="Hir3/CABIN1"/>
</dbReference>
<dbReference type="PANTHER" id="PTHR15502">
    <property type="entry name" value="CALCINEURIN-BINDING PROTEIN CABIN 1-RELATED"/>
    <property type="match status" value="1"/>
</dbReference>
<dbReference type="PANTHER" id="PTHR15502:SF7">
    <property type="entry name" value="CALCINEURIN-BINDING PROTEIN CABIN-1"/>
    <property type="match status" value="1"/>
</dbReference>
<feature type="chain" id="PRO_0000256196" description="Histone transcription regulator 3 homolog">
    <location>
        <begin position="1"/>
        <end position="1591"/>
    </location>
</feature>
<feature type="region of interest" description="Disordered" evidence="2">
    <location>
        <begin position="316"/>
        <end position="340"/>
    </location>
</feature>
<feature type="region of interest" description="Disordered" evidence="2">
    <location>
        <begin position="1569"/>
        <end position="1591"/>
    </location>
</feature>
<feature type="compositionally biased region" description="Basic and acidic residues" evidence="2">
    <location>
        <begin position="323"/>
        <end position="334"/>
    </location>
</feature>
<feature type="compositionally biased region" description="Basic and acidic residues" evidence="2">
    <location>
        <begin position="1581"/>
        <end position="1591"/>
    </location>
</feature>
<gene>
    <name type="primary">HIR3</name>
    <name type="ordered locus">CAALFM_C307680WA</name>
    <name type="ORF">CaO19.14011</name>
    <name type="ORF">CaO19.6719</name>
</gene>
<keyword id="KW-0159">Chromosome partition</keyword>
<keyword id="KW-0539">Nucleus</keyword>
<keyword id="KW-1185">Reference proteome</keyword>
<keyword id="KW-0804">Transcription</keyword>
<keyword id="KW-0805">Transcription regulation</keyword>